<evidence type="ECO:0000250" key="1"/>
<evidence type="ECO:0000250" key="2">
    <source>
        <dbReference type="UniProtKB" id="P53850"/>
    </source>
</evidence>
<evidence type="ECO:0000256" key="3">
    <source>
        <dbReference type="SAM" id="MobiDB-lite"/>
    </source>
</evidence>
<evidence type="ECO:0000305" key="4"/>
<dbReference type="EMBL" id="ACFL01000082">
    <property type="protein sequence ID" value="EEU07388.1"/>
    <property type="molecule type" value="Genomic_DNA"/>
</dbReference>
<dbReference type="Proteomes" id="UP000008073">
    <property type="component" value="Unassembled WGS sequence"/>
</dbReference>
<dbReference type="GO" id="GO:0005737">
    <property type="term" value="C:cytoplasm"/>
    <property type="evidence" value="ECO:0007669"/>
    <property type="project" value="UniProtKB-SubCell"/>
</dbReference>
<dbReference type="GO" id="GO:0005634">
    <property type="term" value="C:nucleus"/>
    <property type="evidence" value="ECO:0007669"/>
    <property type="project" value="UniProtKB-SubCell"/>
</dbReference>
<dbReference type="InterPro" id="IPR039024">
    <property type="entry name" value="RTC4"/>
</dbReference>
<dbReference type="InterPro" id="IPR028094">
    <property type="entry name" value="RTC4_C"/>
</dbReference>
<dbReference type="PANTHER" id="PTHR41391">
    <property type="entry name" value="RESTRICTION OF TELOMERE CAPPING PROTEIN 4"/>
    <property type="match status" value="1"/>
</dbReference>
<dbReference type="PANTHER" id="PTHR41391:SF1">
    <property type="entry name" value="RESTRICTION OF TELOMERE CAPPING PROTEIN 4"/>
    <property type="match status" value="1"/>
</dbReference>
<dbReference type="Pfam" id="PF14474">
    <property type="entry name" value="RTC4"/>
    <property type="match status" value="1"/>
</dbReference>
<dbReference type="SMART" id="SM01312">
    <property type="entry name" value="RTC4"/>
    <property type="match status" value="1"/>
</dbReference>
<protein>
    <recommendedName>
        <fullName>Restriction of telomere capping protein 4</fullName>
    </recommendedName>
</protein>
<feature type="chain" id="PRO_0000408799" description="Restriction of telomere capping protein 4">
    <location>
        <begin position="1"/>
        <end position="401"/>
    </location>
</feature>
<feature type="region of interest" description="Disordered" evidence="3">
    <location>
        <begin position="35"/>
        <end position="59"/>
    </location>
</feature>
<feature type="compositionally biased region" description="Basic and acidic residues" evidence="3">
    <location>
        <begin position="35"/>
        <end position="48"/>
    </location>
</feature>
<feature type="modified residue" description="Phosphoserine" evidence="2">
    <location>
        <position position="23"/>
    </location>
</feature>
<keyword id="KW-0963">Cytoplasm</keyword>
<keyword id="KW-0539">Nucleus</keyword>
<keyword id="KW-0597">Phosphoprotein</keyword>
<sequence length="401" mass="46184">MVGPGLGINRVRRKGVYSTKKGSGDNLLLMKRQGKHDIHDRESDDLSGHDAFSPSKKRGKIDSITEDEIEVKKLSTVATFDKLSRSFPNSEVQAAKNAALRGKEKEEEKVVSIPLIQNLKNEDIESIKCRNNNLLDGKKLLLEAELSAVEDNQIFSSSFPEDKKLSLQSCLSSKEQIIKKLQVREEYMSKFKLPPMLFSDELLTEVEPFMPIVMDILEGKISSAYYFEAKNAFKNSQKAYLSVDEFRKLNLNKFTAGFYGLKRQLRVGEEIAKRYKRALTHNQPATLKWWGITDFCNYVLAPETLTSFCIYQLNLSNKSCSSKTPNKHPKQQLNEKEYYYDPELRMLAYDLLEDTVEYGIIVADSDPIEQWEAAIEEDRLRELKLDVHNYSSRRWRLDTHD</sequence>
<proteinExistence type="inferred from homology"/>
<reference key="1">
    <citation type="journal article" date="2009" name="Genome Res.">
        <title>Genome structure of a Saccharomyces cerevisiae strain widely used in bioethanol production.</title>
        <authorList>
            <person name="Argueso J.L."/>
            <person name="Carazzolle M.F."/>
            <person name="Mieczkowski P.A."/>
            <person name="Duarte F.M."/>
            <person name="Netto O.V.C."/>
            <person name="Missawa S.K."/>
            <person name="Galzerani F."/>
            <person name="Costa G.G.L."/>
            <person name="Vidal R.O."/>
            <person name="Noronha M.F."/>
            <person name="Dominska M."/>
            <person name="Andrietta M.G.S."/>
            <person name="Andrietta S.R."/>
            <person name="Cunha A.F."/>
            <person name="Gomes L.H."/>
            <person name="Tavares F.C.A."/>
            <person name="Alcarde A.R."/>
            <person name="Dietrich F.S."/>
            <person name="McCusker J.H."/>
            <person name="Petes T.D."/>
            <person name="Pereira G.A.G."/>
        </authorList>
    </citation>
    <scope>NUCLEOTIDE SEQUENCE [LARGE SCALE GENOMIC DNA]</scope>
    <source>
        <strain>JAY291</strain>
    </source>
</reference>
<comment type="function">
    <text evidence="1">May be involved in a process influencing telomere capping.</text>
</comment>
<comment type="subcellular location">
    <subcellularLocation>
        <location evidence="1">Cytoplasm</location>
    </subcellularLocation>
    <subcellularLocation>
        <location evidence="1">Nucleus</location>
    </subcellularLocation>
</comment>
<comment type="similarity">
    <text evidence="4">Belongs to the RTC4 family.</text>
</comment>
<organism>
    <name type="scientific">Saccharomyces cerevisiae (strain JAY291)</name>
    <name type="common">Baker's yeast</name>
    <dbReference type="NCBI Taxonomy" id="574961"/>
    <lineage>
        <taxon>Eukaryota</taxon>
        <taxon>Fungi</taxon>
        <taxon>Dikarya</taxon>
        <taxon>Ascomycota</taxon>
        <taxon>Saccharomycotina</taxon>
        <taxon>Saccharomycetes</taxon>
        <taxon>Saccharomycetales</taxon>
        <taxon>Saccharomycetaceae</taxon>
        <taxon>Saccharomyces</taxon>
    </lineage>
</organism>
<gene>
    <name type="primary">RTC4</name>
    <name type="ORF">C1Q_02161</name>
</gene>
<name>RTC4_YEAS2</name>
<accession>C7GPA7</accession>